<comment type="function">
    <text>Catalyzes the stereospecific hydrolysis of the cyclic amide bond of D-hydantoin. Has no activity on dihydropyrimidines.</text>
</comment>
<comment type="cofactor">
    <cofactor evidence="2 3">
        <name>Zn(2+)</name>
        <dbReference type="ChEBI" id="CHEBI:29105"/>
    </cofactor>
    <cofactor evidence="2 3">
        <name>Ni(2+)</name>
        <dbReference type="ChEBI" id="CHEBI:49786"/>
    </cofactor>
    <cofactor evidence="2 3">
        <name>Co(2+)</name>
        <dbReference type="ChEBI" id="CHEBI:48828"/>
    </cofactor>
    <cofactor evidence="2 3">
        <name>Mn(2+)</name>
        <dbReference type="ChEBI" id="CHEBI:29035"/>
    </cofactor>
    <text evidence="2 3">Binds 2 Zn(2+) ions per subunit. Can also use Ni(2+), Co(2+) or Mn(2+).</text>
</comment>
<comment type="activity regulation">
    <text evidence="3">Completely inhibited by p-chloromercuribenzoate and partially inhibited by metal chelating agents.</text>
</comment>
<comment type="biophysicochemical properties">
    <temperatureDependence>
        <text evidence="3">The optimal activity is at pH 8.8 for manganese-containing form and pH 8.5 for cobalt-containing form. The oligomer is thermostable and retains full initial activity at 40-60 degrees Celsius.</text>
    </temperatureDependence>
</comment>
<comment type="subunit">
    <text evidence="2">Homotetramer.</text>
</comment>
<comment type="PTM">
    <text evidence="2">Carboxylation allows a single lysine to coordinate two zinc ions.</text>
</comment>
<comment type="similarity">
    <text evidence="4">Belongs to the metallo-dependent hydrolases superfamily. Hydantoinase/dihydropyrimidinase family.</text>
</comment>
<accession>Q45515</accession>
<protein>
    <recommendedName>
        <fullName>D-hydantoinase</fullName>
        <ecNumber>3.5.2.-</ecNumber>
    </recommendedName>
</protein>
<keyword id="KW-0002">3D-structure</keyword>
<keyword id="KW-0903">Direct protein sequencing</keyword>
<keyword id="KW-0378">Hydrolase</keyword>
<keyword id="KW-0479">Metal-binding</keyword>
<keyword id="KW-0862">Zinc</keyword>
<evidence type="ECO:0000250" key="1">
    <source>
        <dbReference type="UniProtKB" id="Q9P903"/>
    </source>
</evidence>
<evidence type="ECO:0000269" key="2">
    <source>
    </source>
</evidence>
<evidence type="ECO:0000269" key="3">
    <source>
    </source>
</evidence>
<evidence type="ECO:0000305" key="4"/>
<evidence type="ECO:0007744" key="5">
    <source>
        <dbReference type="PDB" id="1K1D"/>
    </source>
</evidence>
<evidence type="ECO:0007829" key="6">
    <source>
        <dbReference type="PDB" id="1K1D"/>
    </source>
</evidence>
<reference key="1">
    <citation type="journal article" date="1994" name="Biosci. Biotechnol. Biochem.">
        <title>A thermostable hydantoinase of Bacillus stearothermophilus NS1122A: cloning, sequencing, and high expression of the enzyme gene, and some properties of the expressed enzyme.</title>
        <authorList>
            <person name="Mukohara Y."/>
            <person name="Ishikawa T."/>
            <person name="Watabe K."/>
            <person name="Nakamura H."/>
        </authorList>
    </citation>
    <scope>NUCLEOTIDE SEQUENCE [GENOMIC DNA]</scope>
    <scope>PROTEIN SEQUENCE OF 1-20</scope>
    <scope>COFACTOR</scope>
    <scope>ACTIVITY REGULATION</scope>
    <scope>BIOPHYSICOCHEMICAL PROPERTIES</scope>
    <source>
        <strain>NS1122A</strain>
    </source>
</reference>
<reference key="2">
    <citation type="journal article" date="2002" name="Biochemistry">
        <title>Crystal structure of D-hydantoinase from Bacillus stearothermophilus: insight into the stereochemistry of enantioselectivity.</title>
        <authorList>
            <person name="Cheon Y.-H."/>
            <person name="Kim H.-S."/>
            <person name="Han K.-H."/>
            <person name="Abendroth J."/>
            <person name="Niefind K."/>
            <person name="Schomburg D."/>
            <person name="Wang J."/>
            <person name="Kim Y."/>
        </authorList>
    </citation>
    <scope>X-RAY CRYSTALLOGRAPHY (3.01 ANGSTROMS) OF 1-459 IN COMPLEX WITH ZINC IONS</scope>
    <scope>SUBUNIT</scope>
    <scope>COFACTOR</scope>
    <scope>CARBOXYLATION AT LYS-150</scope>
</reference>
<proteinExistence type="evidence at protein level"/>
<feature type="chain" id="PRO_0000165933" description="D-hydantoinase">
    <location>
        <begin position="1"/>
        <end position="471"/>
    </location>
</feature>
<feature type="binding site" evidence="2 5">
    <location>
        <position position="58"/>
    </location>
    <ligand>
        <name>Zn(2+)</name>
        <dbReference type="ChEBI" id="CHEBI:29105"/>
        <label>1</label>
    </ligand>
</feature>
<feature type="binding site" evidence="2 5">
    <location>
        <position position="60"/>
    </location>
    <ligand>
        <name>Zn(2+)</name>
        <dbReference type="ChEBI" id="CHEBI:29105"/>
        <label>1</label>
    </ligand>
</feature>
<feature type="binding site" description="via carbamate group" evidence="2 5">
    <location>
        <position position="150"/>
    </location>
    <ligand>
        <name>Zn(2+)</name>
        <dbReference type="ChEBI" id="CHEBI:29105"/>
        <label>1</label>
    </ligand>
</feature>
<feature type="binding site" description="via carbamate group" evidence="2 5">
    <location>
        <position position="150"/>
    </location>
    <ligand>
        <name>Zn(2+)</name>
        <dbReference type="ChEBI" id="CHEBI:29105"/>
        <label>2</label>
    </ligand>
</feature>
<feature type="binding site" evidence="1">
    <location>
        <position position="155"/>
    </location>
    <ligand>
        <name>substrate</name>
    </ligand>
</feature>
<feature type="binding site" evidence="2 5">
    <location>
        <position position="183"/>
    </location>
    <ligand>
        <name>Zn(2+)</name>
        <dbReference type="ChEBI" id="CHEBI:29105"/>
        <label>2</label>
    </ligand>
</feature>
<feature type="binding site" evidence="2 5">
    <location>
        <position position="239"/>
    </location>
    <ligand>
        <name>Zn(2+)</name>
        <dbReference type="ChEBI" id="CHEBI:29105"/>
        <label>2</label>
    </ligand>
</feature>
<feature type="binding site" evidence="1">
    <location>
        <position position="288"/>
    </location>
    <ligand>
        <name>substrate</name>
    </ligand>
</feature>
<feature type="binding site" evidence="2 5">
    <location>
        <position position="315"/>
    </location>
    <ligand>
        <name>Zn(2+)</name>
        <dbReference type="ChEBI" id="CHEBI:29105"/>
        <label>1</label>
    </ligand>
</feature>
<feature type="binding site" evidence="1">
    <location>
        <position position="337"/>
    </location>
    <ligand>
        <name>substrate</name>
    </ligand>
</feature>
<feature type="modified residue" description="N6-carboxylysine" evidence="2">
    <location>
        <position position="150"/>
    </location>
</feature>
<feature type="strand" evidence="6">
    <location>
        <begin position="3"/>
        <end position="11"/>
    </location>
</feature>
<feature type="strand" evidence="6">
    <location>
        <begin position="16"/>
        <end position="23"/>
    </location>
</feature>
<feature type="strand" evidence="6">
    <location>
        <begin position="25"/>
        <end position="34"/>
    </location>
</feature>
<feature type="strand" evidence="6">
    <location>
        <begin position="49"/>
        <end position="52"/>
    </location>
</feature>
<feature type="strand" evidence="6">
    <location>
        <begin position="54"/>
        <end position="59"/>
    </location>
</feature>
<feature type="strand" evidence="6">
    <location>
        <begin position="66"/>
        <end position="68"/>
    </location>
</feature>
<feature type="helix" evidence="6">
    <location>
        <begin position="74"/>
        <end position="83"/>
    </location>
</feature>
<feature type="strand" evidence="6">
    <location>
        <begin position="86"/>
        <end position="93"/>
    </location>
</feature>
<feature type="helix" evidence="6">
    <location>
        <begin position="101"/>
        <end position="112"/>
    </location>
</feature>
<feature type="turn" evidence="6">
    <location>
        <begin position="113"/>
        <end position="115"/>
    </location>
</feature>
<feature type="strand" evidence="6">
    <location>
        <begin position="117"/>
        <end position="125"/>
    </location>
</feature>
<feature type="helix" evidence="6">
    <location>
        <begin position="131"/>
        <end position="142"/>
    </location>
</feature>
<feature type="strand" evidence="6">
    <location>
        <begin position="148"/>
        <end position="155"/>
    </location>
</feature>
<feature type="turn" evidence="6">
    <location>
        <begin position="156"/>
        <end position="159"/>
    </location>
</feature>
<feature type="helix" evidence="6">
    <location>
        <begin position="163"/>
        <end position="176"/>
    </location>
</feature>
<feature type="strand" evidence="6">
    <location>
        <begin position="179"/>
        <end position="183"/>
    </location>
</feature>
<feature type="helix" evidence="6">
    <location>
        <begin position="187"/>
        <end position="199"/>
    </location>
</feature>
<feature type="helix" evidence="6">
    <location>
        <begin position="206"/>
        <end position="210"/>
    </location>
</feature>
<feature type="helix" evidence="6">
    <location>
        <begin position="214"/>
        <end position="231"/>
    </location>
</feature>
<feature type="strand" evidence="6">
    <location>
        <begin position="234"/>
        <end position="237"/>
    </location>
</feature>
<feature type="helix" evidence="6">
    <location>
        <begin position="243"/>
        <end position="254"/>
    </location>
</feature>
<feature type="strand" evidence="6">
    <location>
        <begin position="258"/>
        <end position="263"/>
    </location>
</feature>
<feature type="helix" evidence="6">
    <location>
        <begin position="265"/>
        <end position="269"/>
    </location>
</feature>
<feature type="helix" evidence="6">
    <location>
        <begin position="272"/>
        <end position="275"/>
    </location>
</feature>
<feature type="helix" evidence="6">
    <location>
        <begin position="281"/>
        <end position="285"/>
    </location>
</feature>
<feature type="helix" evidence="6">
    <location>
        <begin position="296"/>
        <end position="306"/>
    </location>
</feature>
<feature type="strand" evidence="6">
    <location>
        <begin position="307"/>
        <end position="309"/>
    </location>
</feature>
<feature type="turn" evidence="6">
    <location>
        <begin position="321"/>
        <end position="324"/>
    </location>
</feature>
<feature type="helix" evidence="6">
    <location>
        <begin position="325"/>
        <end position="328"/>
    </location>
</feature>
<feature type="helix" evidence="6">
    <location>
        <begin position="332"/>
        <end position="334"/>
    </location>
</feature>
<feature type="turn" evidence="6">
    <location>
        <begin position="342"/>
        <end position="344"/>
    </location>
</feature>
<feature type="helix" evidence="6">
    <location>
        <begin position="345"/>
        <end position="352"/>
    </location>
</feature>
<feature type="helix" evidence="6">
    <location>
        <begin position="354"/>
        <end position="356"/>
    </location>
</feature>
<feature type="helix" evidence="6">
    <location>
        <begin position="361"/>
        <end position="368"/>
    </location>
</feature>
<feature type="helix" evidence="6">
    <location>
        <begin position="370"/>
        <end position="375"/>
    </location>
</feature>
<feature type="turn" evidence="6">
    <location>
        <begin position="379"/>
        <end position="381"/>
    </location>
</feature>
<feature type="strand" evidence="6">
    <location>
        <begin position="393"/>
        <end position="403"/>
    </location>
</feature>
<feature type="turn" evidence="6">
    <location>
        <begin position="406"/>
        <end position="408"/>
    </location>
</feature>
<feature type="strand" evidence="6">
    <location>
        <begin position="411"/>
        <end position="414"/>
    </location>
</feature>
<feature type="turn" evidence="6">
    <location>
        <begin position="417"/>
        <end position="420"/>
    </location>
</feature>
<feature type="strand" evidence="6">
    <location>
        <begin position="422"/>
        <end position="432"/>
    </location>
</feature>
<feature type="strand" evidence="6">
    <location>
        <begin position="435"/>
        <end position="439"/>
    </location>
</feature>
<name>HYDA_GEOSE</name>
<organism>
    <name type="scientific">Geobacillus stearothermophilus</name>
    <name type="common">Bacillus stearothermophilus</name>
    <dbReference type="NCBI Taxonomy" id="1422"/>
    <lineage>
        <taxon>Bacteria</taxon>
        <taxon>Bacillati</taxon>
        <taxon>Bacillota</taxon>
        <taxon>Bacilli</taxon>
        <taxon>Bacillales</taxon>
        <taxon>Anoxybacillaceae</taxon>
        <taxon>Geobacillus</taxon>
    </lineage>
</organism>
<sequence length="471" mass="51725">MTKLIKNGTIVTATDIYEADLLIQDGKIAVIGRNLDESGAEVIDATGCYVFPGGIDPHTHLDMPFGGTVTKDDFESGTIAAAFGGTTTIIDFCLTNKGEPLKKAIETWHNKATGKAVIDYGFHLMISEITDDVLEELPKVIEEEGITSFKVFMAYKDVFQADDGTLYRTLVAAKELGALVMVHAENGDVIDYLTKKALEDGHTDPIYHALTRPPELEGEATGRACQLTELAGSQLYVVHVSCAQAVEKIAEARNKGLNVWGETCPQYLVLDQSYLEKPNFEGAKYVWSPPLREKWHQEVLWNALKNGQLQTLGSDQCSFDFKGQKELGRGDFTKIPNGGPIIEDRVSILFSEGVKKGRITLNQFVDIVSTRIAKLFGLFPKKGTIAVGADADLVIFDPTVERVISAETHHMAVDYNPFEGMKVTGEPVSVLCRGEFVVRDKQFVGKPGYGQYVKRAKYGALMADQDVVKMS</sequence>
<dbReference type="EC" id="3.5.2.-"/>
<dbReference type="EMBL" id="S73773">
    <property type="protein sequence ID" value="AAC60487.1"/>
    <property type="molecule type" value="Genomic_DNA"/>
</dbReference>
<dbReference type="PIR" id="JC2310">
    <property type="entry name" value="JC2310"/>
</dbReference>
<dbReference type="PDB" id="1K1D">
    <property type="method" value="X-ray"/>
    <property type="resolution" value="3.01 A"/>
    <property type="chains" value="A/B/C/D/E/F/G/H=1-459"/>
</dbReference>
<dbReference type="PDBsum" id="1K1D"/>
<dbReference type="SMR" id="Q45515"/>
<dbReference type="DrugBank" id="DB03801">
    <property type="generic name" value="Lysine Nz-Carboxylic Acid"/>
</dbReference>
<dbReference type="BRENDA" id="3.5.2.2">
    <property type="organism ID" value="623"/>
</dbReference>
<dbReference type="EvolutionaryTrace" id="Q45515"/>
<dbReference type="GO" id="GO:0005829">
    <property type="term" value="C:cytosol"/>
    <property type="evidence" value="ECO:0007669"/>
    <property type="project" value="TreeGrafter"/>
</dbReference>
<dbReference type="GO" id="GO:0016812">
    <property type="term" value="F:hydrolase activity, acting on carbon-nitrogen (but not peptide) bonds, in cyclic amides"/>
    <property type="evidence" value="ECO:0007669"/>
    <property type="project" value="TreeGrafter"/>
</dbReference>
<dbReference type="GO" id="GO:0046872">
    <property type="term" value="F:metal ion binding"/>
    <property type="evidence" value="ECO:0007669"/>
    <property type="project" value="UniProtKB-KW"/>
</dbReference>
<dbReference type="CDD" id="cd01314">
    <property type="entry name" value="D-HYD"/>
    <property type="match status" value="1"/>
</dbReference>
<dbReference type="FunFam" id="3.20.20.140:FF:000076">
    <property type="entry name" value="Dihydropyrimidinase like 2"/>
    <property type="match status" value="1"/>
</dbReference>
<dbReference type="Gene3D" id="3.20.20.140">
    <property type="entry name" value="Metal-dependent hydrolases"/>
    <property type="match status" value="1"/>
</dbReference>
<dbReference type="Gene3D" id="2.30.40.10">
    <property type="entry name" value="Urease, subunit C, domain 1"/>
    <property type="match status" value="1"/>
</dbReference>
<dbReference type="InterPro" id="IPR006680">
    <property type="entry name" value="Amidohydro-rel"/>
</dbReference>
<dbReference type="InterPro" id="IPR011778">
    <property type="entry name" value="Hydantoinase/dihydroPyrase"/>
</dbReference>
<dbReference type="InterPro" id="IPR011059">
    <property type="entry name" value="Metal-dep_hydrolase_composite"/>
</dbReference>
<dbReference type="InterPro" id="IPR032466">
    <property type="entry name" value="Metal_Hydrolase"/>
</dbReference>
<dbReference type="InterPro" id="IPR050378">
    <property type="entry name" value="Metallo-dep_Hydrolases_sf"/>
</dbReference>
<dbReference type="NCBIfam" id="TIGR02033">
    <property type="entry name" value="D-hydantoinase"/>
    <property type="match status" value="1"/>
</dbReference>
<dbReference type="PANTHER" id="PTHR11647:SF1">
    <property type="entry name" value="COLLAPSIN RESPONSE MEDIATOR PROTEIN"/>
    <property type="match status" value="1"/>
</dbReference>
<dbReference type="PANTHER" id="PTHR11647">
    <property type="entry name" value="HYDRANTOINASE/DIHYDROPYRIMIDINASE FAMILY MEMBER"/>
    <property type="match status" value="1"/>
</dbReference>
<dbReference type="Pfam" id="PF01979">
    <property type="entry name" value="Amidohydro_1"/>
    <property type="match status" value="1"/>
</dbReference>
<dbReference type="SUPFAM" id="SSF51338">
    <property type="entry name" value="Composite domain of metallo-dependent hydrolases"/>
    <property type="match status" value="1"/>
</dbReference>
<dbReference type="SUPFAM" id="SSF51556">
    <property type="entry name" value="Metallo-dependent hydrolases"/>
    <property type="match status" value="1"/>
</dbReference>